<organism>
    <name type="scientific">Borrelia duttonii (strain Ly)</name>
    <dbReference type="NCBI Taxonomy" id="412419"/>
    <lineage>
        <taxon>Bacteria</taxon>
        <taxon>Pseudomonadati</taxon>
        <taxon>Spirochaetota</taxon>
        <taxon>Spirochaetia</taxon>
        <taxon>Spirochaetales</taxon>
        <taxon>Borreliaceae</taxon>
        <taxon>Borrelia</taxon>
    </lineage>
</organism>
<protein>
    <recommendedName>
        <fullName evidence="1">Large ribosomal subunit protein bL9</fullName>
    </recommendedName>
    <alternativeName>
        <fullName evidence="2">50S ribosomal protein L9</fullName>
    </alternativeName>
</protein>
<proteinExistence type="inferred from homology"/>
<name>RL9_BORDL</name>
<dbReference type="EMBL" id="CP000976">
    <property type="protein sequence ID" value="ACH93071.1"/>
    <property type="molecule type" value="Genomic_DNA"/>
</dbReference>
<dbReference type="RefSeq" id="WP_012537883.1">
    <property type="nucleotide sequence ID" value="NC_011229.1"/>
</dbReference>
<dbReference type="SMR" id="B5RLI6"/>
<dbReference type="STRING" id="412419.BDU_115"/>
<dbReference type="KEGG" id="bdu:BDU_115"/>
<dbReference type="eggNOG" id="COG0359">
    <property type="taxonomic scope" value="Bacteria"/>
</dbReference>
<dbReference type="HOGENOM" id="CLU_078938_1_2_12"/>
<dbReference type="OrthoDB" id="9788336at2"/>
<dbReference type="Proteomes" id="UP000000611">
    <property type="component" value="Chromosome"/>
</dbReference>
<dbReference type="GO" id="GO:1990904">
    <property type="term" value="C:ribonucleoprotein complex"/>
    <property type="evidence" value="ECO:0007669"/>
    <property type="project" value="UniProtKB-KW"/>
</dbReference>
<dbReference type="GO" id="GO:0005840">
    <property type="term" value="C:ribosome"/>
    <property type="evidence" value="ECO:0007669"/>
    <property type="project" value="UniProtKB-KW"/>
</dbReference>
<dbReference type="GO" id="GO:0019843">
    <property type="term" value="F:rRNA binding"/>
    <property type="evidence" value="ECO:0007669"/>
    <property type="project" value="UniProtKB-UniRule"/>
</dbReference>
<dbReference type="GO" id="GO:0003735">
    <property type="term" value="F:structural constituent of ribosome"/>
    <property type="evidence" value="ECO:0007669"/>
    <property type="project" value="InterPro"/>
</dbReference>
<dbReference type="GO" id="GO:0006412">
    <property type="term" value="P:translation"/>
    <property type="evidence" value="ECO:0007669"/>
    <property type="project" value="UniProtKB-UniRule"/>
</dbReference>
<dbReference type="FunFam" id="3.40.5.10:FF:000003">
    <property type="entry name" value="50S ribosomal protein L9"/>
    <property type="match status" value="1"/>
</dbReference>
<dbReference type="Gene3D" id="3.10.430.100">
    <property type="entry name" value="Ribosomal protein L9, C-terminal domain"/>
    <property type="match status" value="1"/>
</dbReference>
<dbReference type="Gene3D" id="3.40.5.10">
    <property type="entry name" value="Ribosomal protein L9, N-terminal domain"/>
    <property type="match status" value="1"/>
</dbReference>
<dbReference type="HAMAP" id="MF_00503">
    <property type="entry name" value="Ribosomal_bL9"/>
    <property type="match status" value="1"/>
</dbReference>
<dbReference type="InterPro" id="IPR000244">
    <property type="entry name" value="Ribosomal_bL9"/>
</dbReference>
<dbReference type="InterPro" id="IPR009027">
    <property type="entry name" value="Ribosomal_bL9/RNase_H1_N"/>
</dbReference>
<dbReference type="InterPro" id="IPR020594">
    <property type="entry name" value="Ribosomal_bL9_bac/chp"/>
</dbReference>
<dbReference type="InterPro" id="IPR020069">
    <property type="entry name" value="Ribosomal_bL9_C"/>
</dbReference>
<dbReference type="InterPro" id="IPR036791">
    <property type="entry name" value="Ribosomal_bL9_C_sf"/>
</dbReference>
<dbReference type="InterPro" id="IPR020070">
    <property type="entry name" value="Ribosomal_bL9_N"/>
</dbReference>
<dbReference type="InterPro" id="IPR036935">
    <property type="entry name" value="Ribosomal_bL9_N_sf"/>
</dbReference>
<dbReference type="NCBIfam" id="TIGR00158">
    <property type="entry name" value="L9"/>
    <property type="match status" value="1"/>
</dbReference>
<dbReference type="PANTHER" id="PTHR21368">
    <property type="entry name" value="50S RIBOSOMAL PROTEIN L9"/>
    <property type="match status" value="1"/>
</dbReference>
<dbReference type="Pfam" id="PF03948">
    <property type="entry name" value="Ribosomal_L9_C"/>
    <property type="match status" value="1"/>
</dbReference>
<dbReference type="Pfam" id="PF01281">
    <property type="entry name" value="Ribosomal_L9_N"/>
    <property type="match status" value="1"/>
</dbReference>
<dbReference type="SUPFAM" id="SSF55658">
    <property type="entry name" value="L9 N-domain-like"/>
    <property type="match status" value="1"/>
</dbReference>
<dbReference type="SUPFAM" id="SSF55653">
    <property type="entry name" value="Ribosomal protein L9 C-domain"/>
    <property type="match status" value="1"/>
</dbReference>
<dbReference type="PROSITE" id="PS00651">
    <property type="entry name" value="RIBOSOMAL_L9"/>
    <property type="match status" value="1"/>
</dbReference>
<evidence type="ECO:0000255" key="1">
    <source>
        <dbReference type="HAMAP-Rule" id="MF_00503"/>
    </source>
</evidence>
<evidence type="ECO:0000305" key="2"/>
<keyword id="KW-0687">Ribonucleoprotein</keyword>
<keyword id="KW-0689">Ribosomal protein</keyword>
<keyword id="KW-0694">RNA-binding</keyword>
<keyword id="KW-0699">rRNA-binding</keyword>
<sequence>MKVILREDFINLGKEGDIVDVKDGFARNYLLPKGFAVFSNKHNIDIFSQKKRAILKRQETRRKMAVELKEKLDKVNLEFIMQSNDSGKLFHSINSSNIADELLKLGFEIERRKIDMHHGALKAFGTYNVTIKLYEGISSVITVEIKREEKKNSLKKSKSVEKEV</sequence>
<feature type="chain" id="PRO_1000126872" description="Large ribosomal subunit protein bL9">
    <location>
        <begin position="1"/>
        <end position="164"/>
    </location>
</feature>
<comment type="function">
    <text evidence="1">Binds to the 23S rRNA.</text>
</comment>
<comment type="similarity">
    <text evidence="1">Belongs to the bacterial ribosomal protein bL9 family.</text>
</comment>
<gene>
    <name evidence="1" type="primary">rplI</name>
    <name type="ordered locus">BDU_115</name>
</gene>
<reference key="1">
    <citation type="journal article" date="2008" name="PLoS Genet.">
        <title>The genome of Borrelia recurrentis, the agent of deadly louse-borne relapsing fever, is a degraded subset of tick-borne Borrelia duttonii.</title>
        <authorList>
            <person name="Lescot M."/>
            <person name="Audic S."/>
            <person name="Robert C."/>
            <person name="Nguyen T.T."/>
            <person name="Blanc G."/>
            <person name="Cutler S.J."/>
            <person name="Wincker P."/>
            <person name="Couloux A."/>
            <person name="Claverie J.-M."/>
            <person name="Raoult D."/>
            <person name="Drancourt M."/>
        </authorList>
    </citation>
    <scope>NUCLEOTIDE SEQUENCE [LARGE SCALE GENOMIC DNA]</scope>
    <source>
        <strain>Ly</strain>
    </source>
</reference>
<accession>B5RLI6</accession>